<accession>Q8IZ13</accession>
<accession>D3DQJ9</accession>
<accession>Q9H5S8</accession>
<accession>Q9UH87</accession>
<dbReference type="EMBL" id="AF205598">
    <property type="protein sequence ID" value="AAF18452.1"/>
    <property type="molecule type" value="Genomic_DNA"/>
</dbReference>
<dbReference type="EMBL" id="AK026754">
    <property type="protein sequence ID" value="BAB15542.1"/>
    <property type="molecule type" value="mRNA"/>
</dbReference>
<dbReference type="EMBL" id="CH471062">
    <property type="protein sequence ID" value="EAW61557.1"/>
    <property type="molecule type" value="Genomic_DNA"/>
</dbReference>
<dbReference type="EMBL" id="CH471062">
    <property type="protein sequence ID" value="EAW61558.1"/>
    <property type="molecule type" value="Genomic_DNA"/>
</dbReference>
<dbReference type="EMBL" id="CH471062">
    <property type="protein sequence ID" value="EAW61559.1"/>
    <property type="molecule type" value="Genomic_DNA"/>
</dbReference>
<dbReference type="EMBL" id="CH471062">
    <property type="protein sequence ID" value="EAW61560.1"/>
    <property type="molecule type" value="Genomic_DNA"/>
</dbReference>
<dbReference type="EMBL" id="BC032603">
    <property type="protein sequence ID" value="AAH32603.1"/>
    <property type="molecule type" value="mRNA"/>
</dbReference>
<dbReference type="EMBL" id="BC112128">
    <property type="protein sequence ID" value="AAI12129.1"/>
    <property type="molecule type" value="mRNA"/>
</dbReference>
<dbReference type="EMBL" id="BC112130">
    <property type="protein sequence ID" value="AAI12131.1"/>
    <property type="molecule type" value="mRNA"/>
</dbReference>
<dbReference type="CCDS" id="CCDS34283.1"/>
<dbReference type="RefSeq" id="NP_001290180.1">
    <property type="nucleotide sequence ID" value="NM_001303251.2"/>
</dbReference>
<dbReference type="RefSeq" id="NP_071373.2">
    <property type="nucleotide sequence ID" value="NM_022090.4"/>
</dbReference>
<dbReference type="BioGRID" id="121989">
    <property type="interactions" value="17"/>
</dbReference>
<dbReference type="FunCoup" id="Q8IZ13">
    <property type="interactions" value="572"/>
</dbReference>
<dbReference type="IntAct" id="Q8IZ13">
    <property type="interactions" value="15"/>
</dbReference>
<dbReference type="MINT" id="Q8IZ13"/>
<dbReference type="STRING" id="9606.ENSP00000386184"/>
<dbReference type="iPTMnet" id="Q8IZ13"/>
<dbReference type="PhosphoSitePlus" id="Q8IZ13"/>
<dbReference type="BioMuta" id="ZBED8"/>
<dbReference type="DMDM" id="74728411"/>
<dbReference type="jPOST" id="Q8IZ13"/>
<dbReference type="MassIVE" id="Q8IZ13"/>
<dbReference type="PaxDb" id="9606-ENSP00000386184"/>
<dbReference type="PeptideAtlas" id="Q8IZ13"/>
<dbReference type="ProteomicsDB" id="71267"/>
<dbReference type="Pumba" id="Q8IZ13"/>
<dbReference type="Antibodypedia" id="45858">
    <property type="antibodies" value="31 antibodies from 11 providers"/>
</dbReference>
<dbReference type="DNASU" id="63920"/>
<dbReference type="Ensembl" id="ENST00000408953.4">
    <property type="protein sequence ID" value="ENSP00000386184.3"/>
    <property type="gene ID" value="ENSG00000221886.4"/>
</dbReference>
<dbReference type="Ensembl" id="ENST00000523213.1">
    <property type="protein sequence ID" value="ENSP00000428831.1"/>
    <property type="gene ID" value="ENSG00000221886.4"/>
</dbReference>
<dbReference type="GeneID" id="63920"/>
<dbReference type="KEGG" id="hsa:63920"/>
<dbReference type="MANE-Select" id="ENST00000408953.4">
    <property type="protein sequence ID" value="ENSP00000386184.3"/>
    <property type="RefSeq nucleotide sequence ID" value="NM_022090.5"/>
    <property type="RefSeq protein sequence ID" value="NP_071373.2"/>
</dbReference>
<dbReference type="UCSC" id="uc003lye.2">
    <property type="organism name" value="human"/>
</dbReference>
<dbReference type="AGR" id="HGNC:30804"/>
<dbReference type="CTD" id="63920"/>
<dbReference type="GeneCards" id="FAM200C"/>
<dbReference type="HGNC" id="HGNC:30804">
    <property type="gene designation" value="FAM200C"/>
</dbReference>
<dbReference type="HPA" id="ENSG00000221886">
    <property type="expression patterns" value="Low tissue specificity"/>
</dbReference>
<dbReference type="MIM" id="615253">
    <property type="type" value="gene"/>
</dbReference>
<dbReference type="neXtProt" id="NX_Q8IZ13"/>
<dbReference type="OpenTargets" id="ENSG00000221886"/>
<dbReference type="PharmGKB" id="PA164717348"/>
<dbReference type="VEuPathDB" id="HostDB:ENSG00000221886"/>
<dbReference type="eggNOG" id="ENOG502QT83">
    <property type="taxonomic scope" value="Eukaryota"/>
</dbReference>
<dbReference type="GeneTree" id="ENSGT00940000163112"/>
<dbReference type="HOGENOM" id="CLU_021316_5_0_1"/>
<dbReference type="InParanoid" id="Q8IZ13"/>
<dbReference type="OMA" id="TTDMEDC"/>
<dbReference type="OrthoDB" id="6144063at2759"/>
<dbReference type="PAN-GO" id="Q8IZ13">
    <property type="GO annotations" value="0 GO annotations based on evolutionary models"/>
</dbReference>
<dbReference type="PhylomeDB" id="Q8IZ13"/>
<dbReference type="TreeFam" id="TF328297"/>
<dbReference type="PathwayCommons" id="Q8IZ13"/>
<dbReference type="SignaLink" id="Q8IZ13"/>
<dbReference type="BioGRID-ORCS" id="63920">
    <property type="hits" value="11 hits in 1143 CRISPR screens"/>
</dbReference>
<dbReference type="ChiTaRS" id="ZBED8">
    <property type="organism name" value="human"/>
</dbReference>
<dbReference type="GenomeRNAi" id="63920"/>
<dbReference type="Pharos" id="Q8IZ13">
    <property type="development level" value="Tdark"/>
</dbReference>
<dbReference type="PRO" id="PR:Q8IZ13"/>
<dbReference type="Proteomes" id="UP000005640">
    <property type="component" value="Chromosome 5"/>
</dbReference>
<dbReference type="RNAct" id="Q8IZ13">
    <property type="molecule type" value="protein"/>
</dbReference>
<dbReference type="Bgee" id="ENSG00000221886">
    <property type="expression patterns" value="Expressed in ventricular zone and 156 other cell types or tissues"/>
</dbReference>
<dbReference type="GO" id="GO:0005654">
    <property type="term" value="C:nucleoplasm"/>
    <property type="evidence" value="ECO:0000314"/>
    <property type="project" value="HPA"/>
</dbReference>
<dbReference type="InterPro" id="IPR012337">
    <property type="entry name" value="RNaseH-like_sf"/>
</dbReference>
<dbReference type="PANTHER" id="PTHR45913">
    <property type="entry name" value="EPM2A-INTERACTING PROTEIN 1"/>
    <property type="match status" value="1"/>
</dbReference>
<dbReference type="PANTHER" id="PTHR45913:SF19">
    <property type="entry name" value="LOW QUALITY PROTEIN: ZINC FINGER BED DOMAIN-CONTAINING PROTEIN 5-LIKE"/>
    <property type="match status" value="1"/>
</dbReference>
<dbReference type="SUPFAM" id="SSF53098">
    <property type="entry name" value="Ribonuclease H-like"/>
    <property type="match status" value="1"/>
</dbReference>
<evidence type="ECO:0000269" key="1">
    <source>
    </source>
</evidence>
<evidence type="ECO:0000305" key="2"/>
<evidence type="ECO:0000312" key="3">
    <source>
        <dbReference type="HGNC" id="HGNC:30804"/>
    </source>
</evidence>
<sequence>MSKKRKWDDDYVRYWFTCTTEVDGTQRPQCVLCNSVFSNADLRPSKLSDHFNRQHGGVAGHDLNSLKHMPAPSDQSETLKAFGVASHEDTLLQASYQFAYLCAKEKNPHTVAEKLVKPCALEIAQIVLGPDAQKKLQQVPLSDDVIHSRIDEMSQDILQQVLEDIKASPLKVGIQLAETTDMDDCSQLMAFVRYIKEREIVEEFLFCEPLQLSMKGIDVFNLFRDFFLKHKIALDVCGSVCTDGASSMLGENSEFVAYVKKEIPHIVVTHCLLNPHALVIKTLPTKLRDALFTVVRVINFIKGRAPNHRLFQAFFEEIGIEYSVLLFHTEMRWLSRGQILTHIFEMYEEINQFLHHKSSNLVDGFENKEFKIHLAYLADLFKHLNELSASMQRTGMNTVSAREKLSAFVRKFPFWQKRIEKRNFTNFPFLEEIIVSDNEGIFIAAEITLHLQQLSNFFHGYFSIGDLNEASKWILDPFLFNIDFVDDSYLMKNDLAELRASGQILMEFETMKLEDFWCAQFTAFPNLAKTALEILMPFATTYLCELGFSSLLHFKTKSRSCFNLSDDIRVAISKKVPRFSDIIEQKLQLQQKSL</sequence>
<keyword id="KW-1267">Proteomics identification</keyword>
<keyword id="KW-1185">Reference proteome</keyword>
<gene>
    <name evidence="3" type="primary">FAM200C</name>
    <name type="synonym">Buster3</name>
    <name type="synonym">C5orf54</name>
    <name type="synonym">ZBED8</name>
</gene>
<feature type="chain" id="PRO_0000348452" description="Protein FAM200C">
    <location>
        <begin position="1"/>
        <end position="594"/>
    </location>
</feature>
<feature type="sequence variant" id="VAR_046179" description="In dbSNP:rs10515808.">
    <original>A</original>
    <variation>S</variation>
    <location>
        <position position="523"/>
    </location>
</feature>
<feature type="sequence conflict" description="In Ref. 1; AAF18452." evidence="2" ref="1">
    <original>L</original>
    <variation>F</variation>
    <location>
        <position position="63"/>
    </location>
</feature>
<feature type="sequence conflict" description="In Ref. 2; BAB15542." evidence="2" ref="2">
    <original>T</original>
    <variation>P</variation>
    <location>
        <position position="556"/>
    </location>
</feature>
<feature type="sequence conflict" description="In Ref. 2; BAB15542." evidence="2" ref="2">
    <original>E</original>
    <variation>D</variation>
    <location>
        <position position="584"/>
    </location>
</feature>
<organism>
    <name type="scientific">Homo sapiens</name>
    <name type="common">Human</name>
    <dbReference type="NCBI Taxonomy" id="9606"/>
    <lineage>
        <taxon>Eukaryota</taxon>
        <taxon>Metazoa</taxon>
        <taxon>Chordata</taxon>
        <taxon>Craniata</taxon>
        <taxon>Vertebrata</taxon>
        <taxon>Euteleostomi</taxon>
        <taxon>Mammalia</taxon>
        <taxon>Eutheria</taxon>
        <taxon>Euarchontoglires</taxon>
        <taxon>Primates</taxon>
        <taxon>Haplorrhini</taxon>
        <taxon>Catarrhini</taxon>
        <taxon>Hominidae</taxon>
        <taxon>Homo</taxon>
    </lineage>
</organism>
<name>F200C_HUMAN</name>
<protein>
    <recommendedName>
        <fullName evidence="2">Protein FAM200C</fullName>
    </recommendedName>
    <alternativeName>
        <fullName>Protein ZBED8</fullName>
    </alternativeName>
    <alternativeName>
        <fullName>Transposon-derived Buster3 transposase-like protein</fullName>
    </alternativeName>
    <alternativeName>
        <fullName>Zinc finger BED domain-containing protein 8</fullName>
    </alternativeName>
</protein>
<comment type="interaction">
    <interactant intactId="EBI-7186123">
        <id>Q8IZ13</id>
    </interactant>
    <interactant intactId="EBI-742054">
        <id>Q96D03</id>
        <label>DDIT4L</label>
    </interactant>
    <organismsDiffer>false</organismsDiffer>
    <experiments>3</experiments>
</comment>
<comment type="interaction">
    <interactant intactId="EBI-7186123">
        <id>Q8IZ13</id>
    </interactant>
    <interactant intactId="EBI-16439278">
        <id>Q6FHY5</id>
        <label>MEOX2</label>
    </interactant>
    <organismsDiffer>false</organismsDiffer>
    <experiments>3</experiments>
</comment>
<comment type="interaction">
    <interactant intactId="EBI-7186123">
        <id>Q8IZ13</id>
    </interactant>
    <interactant intactId="EBI-8652459">
        <id>Q8WXB1</id>
        <label>METTL21A</label>
    </interactant>
    <organismsDiffer>false</organismsDiffer>
    <experiments>8</experiments>
</comment>
<comment type="interaction">
    <interactant intactId="EBI-7186123">
        <id>Q8IZ13</id>
    </interactant>
    <interactant intactId="EBI-8641936">
        <id>Q15742</id>
        <label>NAB2</label>
    </interactant>
    <organismsDiffer>false</organismsDiffer>
    <experiments>7</experiments>
</comment>
<comment type="interaction">
    <interactant intactId="EBI-7186123">
        <id>Q8IZ13</id>
    </interactant>
    <interactant intactId="EBI-10829018">
        <id>Q04864-2</id>
        <label>REL</label>
    </interactant>
    <organismsDiffer>false</organismsDiffer>
    <experiments>3</experiments>
</comment>
<comment type="miscellaneous">
    <text evidence="1">May be derived from an ancient transposon that has lost its ability to translocate. Exhibits a close evolutionary relationship with ZBED5, but does not contain any zinc finger.</text>
</comment>
<reference key="1">
    <citation type="journal article" date="1999" name="Curr. Opin. Genet. Dev.">
        <title>Interspersed repeats and other mementos of transposable elements in mammalian genomes.</title>
        <authorList>
            <person name="Smit A.F.A."/>
        </authorList>
    </citation>
    <scope>NUCLEOTIDE SEQUENCE [GENOMIC DNA]</scope>
</reference>
<reference key="2">
    <citation type="journal article" date="2004" name="Nat. Genet.">
        <title>Complete sequencing and characterization of 21,243 full-length human cDNAs.</title>
        <authorList>
            <person name="Ota T."/>
            <person name="Suzuki Y."/>
            <person name="Nishikawa T."/>
            <person name="Otsuki T."/>
            <person name="Sugiyama T."/>
            <person name="Irie R."/>
            <person name="Wakamatsu A."/>
            <person name="Hayashi K."/>
            <person name="Sato H."/>
            <person name="Nagai K."/>
            <person name="Kimura K."/>
            <person name="Makita H."/>
            <person name="Sekine M."/>
            <person name="Obayashi M."/>
            <person name="Nishi T."/>
            <person name="Shibahara T."/>
            <person name="Tanaka T."/>
            <person name="Ishii S."/>
            <person name="Yamamoto J."/>
            <person name="Saito K."/>
            <person name="Kawai Y."/>
            <person name="Isono Y."/>
            <person name="Nakamura Y."/>
            <person name="Nagahari K."/>
            <person name="Murakami K."/>
            <person name="Yasuda T."/>
            <person name="Iwayanagi T."/>
            <person name="Wagatsuma M."/>
            <person name="Shiratori A."/>
            <person name="Sudo H."/>
            <person name="Hosoiri T."/>
            <person name="Kaku Y."/>
            <person name="Kodaira H."/>
            <person name="Kondo H."/>
            <person name="Sugawara M."/>
            <person name="Takahashi M."/>
            <person name="Kanda K."/>
            <person name="Yokoi T."/>
            <person name="Furuya T."/>
            <person name="Kikkawa E."/>
            <person name="Omura Y."/>
            <person name="Abe K."/>
            <person name="Kamihara K."/>
            <person name="Katsuta N."/>
            <person name="Sato K."/>
            <person name="Tanikawa M."/>
            <person name="Yamazaki M."/>
            <person name="Ninomiya K."/>
            <person name="Ishibashi T."/>
            <person name="Yamashita H."/>
            <person name="Murakawa K."/>
            <person name="Fujimori K."/>
            <person name="Tanai H."/>
            <person name="Kimata M."/>
            <person name="Watanabe M."/>
            <person name="Hiraoka S."/>
            <person name="Chiba Y."/>
            <person name="Ishida S."/>
            <person name="Ono Y."/>
            <person name="Takiguchi S."/>
            <person name="Watanabe S."/>
            <person name="Yosida M."/>
            <person name="Hotuta T."/>
            <person name="Kusano J."/>
            <person name="Kanehori K."/>
            <person name="Takahashi-Fujii A."/>
            <person name="Hara H."/>
            <person name="Tanase T.-O."/>
            <person name="Nomura Y."/>
            <person name="Togiya S."/>
            <person name="Komai F."/>
            <person name="Hara R."/>
            <person name="Takeuchi K."/>
            <person name="Arita M."/>
            <person name="Imose N."/>
            <person name="Musashino K."/>
            <person name="Yuuki H."/>
            <person name="Oshima A."/>
            <person name="Sasaki N."/>
            <person name="Aotsuka S."/>
            <person name="Yoshikawa Y."/>
            <person name="Matsunawa H."/>
            <person name="Ichihara T."/>
            <person name="Shiohata N."/>
            <person name="Sano S."/>
            <person name="Moriya S."/>
            <person name="Momiyama H."/>
            <person name="Satoh N."/>
            <person name="Takami S."/>
            <person name="Terashima Y."/>
            <person name="Suzuki O."/>
            <person name="Nakagawa S."/>
            <person name="Senoh A."/>
            <person name="Mizoguchi H."/>
            <person name="Goto Y."/>
            <person name="Shimizu F."/>
            <person name="Wakebe H."/>
            <person name="Hishigaki H."/>
            <person name="Watanabe T."/>
            <person name="Sugiyama A."/>
            <person name="Takemoto M."/>
            <person name="Kawakami B."/>
            <person name="Yamazaki M."/>
            <person name="Watanabe K."/>
            <person name="Kumagai A."/>
            <person name="Itakura S."/>
            <person name="Fukuzumi Y."/>
            <person name="Fujimori Y."/>
            <person name="Komiyama M."/>
            <person name="Tashiro H."/>
            <person name="Tanigami A."/>
            <person name="Fujiwara T."/>
            <person name="Ono T."/>
            <person name="Yamada K."/>
            <person name="Fujii Y."/>
            <person name="Ozaki K."/>
            <person name="Hirao M."/>
            <person name="Ohmori Y."/>
            <person name="Kawabata A."/>
            <person name="Hikiji T."/>
            <person name="Kobatake N."/>
            <person name="Inagaki H."/>
            <person name="Ikema Y."/>
            <person name="Okamoto S."/>
            <person name="Okitani R."/>
            <person name="Kawakami T."/>
            <person name="Noguchi S."/>
            <person name="Itoh T."/>
            <person name="Shigeta K."/>
            <person name="Senba T."/>
            <person name="Matsumura K."/>
            <person name="Nakajima Y."/>
            <person name="Mizuno T."/>
            <person name="Morinaga M."/>
            <person name="Sasaki M."/>
            <person name="Togashi T."/>
            <person name="Oyama M."/>
            <person name="Hata H."/>
            <person name="Watanabe M."/>
            <person name="Komatsu T."/>
            <person name="Mizushima-Sugano J."/>
            <person name="Satoh T."/>
            <person name="Shirai Y."/>
            <person name="Takahashi Y."/>
            <person name="Nakagawa K."/>
            <person name="Okumura K."/>
            <person name="Nagase T."/>
            <person name="Nomura N."/>
            <person name="Kikuchi H."/>
            <person name="Masuho Y."/>
            <person name="Yamashita R."/>
            <person name="Nakai K."/>
            <person name="Yada T."/>
            <person name="Nakamura Y."/>
            <person name="Ohara O."/>
            <person name="Isogai T."/>
            <person name="Sugano S."/>
        </authorList>
    </citation>
    <scope>NUCLEOTIDE SEQUENCE [LARGE SCALE MRNA]</scope>
    <source>
        <tissue>Lung</tissue>
    </source>
</reference>
<reference key="3">
    <citation type="submission" date="2005-09" db="EMBL/GenBank/DDBJ databases">
        <authorList>
            <person name="Mural R.J."/>
            <person name="Istrail S."/>
            <person name="Sutton G.G."/>
            <person name="Florea L."/>
            <person name="Halpern A.L."/>
            <person name="Mobarry C.M."/>
            <person name="Lippert R."/>
            <person name="Walenz B."/>
            <person name="Shatkay H."/>
            <person name="Dew I."/>
            <person name="Miller J.R."/>
            <person name="Flanigan M.J."/>
            <person name="Edwards N.J."/>
            <person name="Bolanos R."/>
            <person name="Fasulo D."/>
            <person name="Halldorsson B.V."/>
            <person name="Hannenhalli S."/>
            <person name="Turner R."/>
            <person name="Yooseph S."/>
            <person name="Lu F."/>
            <person name="Nusskern D.R."/>
            <person name="Shue B.C."/>
            <person name="Zheng X.H."/>
            <person name="Zhong F."/>
            <person name="Delcher A.L."/>
            <person name="Huson D.H."/>
            <person name="Kravitz S.A."/>
            <person name="Mouchard L."/>
            <person name="Reinert K."/>
            <person name="Remington K.A."/>
            <person name="Clark A.G."/>
            <person name="Waterman M.S."/>
            <person name="Eichler E.E."/>
            <person name="Adams M.D."/>
            <person name="Hunkapiller M.W."/>
            <person name="Myers E.W."/>
            <person name="Venter J.C."/>
        </authorList>
    </citation>
    <scope>NUCLEOTIDE SEQUENCE [LARGE SCALE GENOMIC DNA]</scope>
</reference>
<reference key="4">
    <citation type="journal article" date="2004" name="Genome Res.">
        <title>The status, quality, and expansion of the NIH full-length cDNA project: the Mammalian Gene Collection (MGC).</title>
        <authorList>
            <consortium name="The MGC Project Team"/>
        </authorList>
    </citation>
    <scope>NUCLEOTIDE SEQUENCE [LARGE SCALE MRNA]</scope>
    <source>
        <tissue>Leiomyosarcoma</tissue>
        <tissue>Lung</tissue>
    </source>
</reference>
<reference key="5">
    <citation type="journal article" date="2013" name="PLoS ONE">
        <title>ZBED evolution: repeated utilization of DNA transposons as regulators of diverse host functions.</title>
        <authorList>
            <person name="Hayward A."/>
            <person name="Ghazal A."/>
            <person name="Andersson G."/>
            <person name="Andersson L."/>
            <person name="Jern P."/>
        </authorList>
    </citation>
    <scope>EVOLUTIONARY RELATIONSHIP WITH ZBED6</scope>
    <scope>MISCELLANEOUS</scope>
</reference>
<proteinExistence type="evidence at protein level"/>